<proteinExistence type="inferred from homology"/>
<organism>
    <name type="scientific">Vesicomyosocius okutanii subsp. Calyptogena okutanii (strain HA)</name>
    <dbReference type="NCBI Taxonomy" id="412965"/>
    <lineage>
        <taxon>Bacteria</taxon>
        <taxon>Pseudomonadati</taxon>
        <taxon>Pseudomonadota</taxon>
        <taxon>Gammaproteobacteria</taxon>
        <taxon>Candidatus Pseudothioglobaceae</taxon>
        <taxon>Candidatus Vesicomyosocius</taxon>
    </lineage>
</organism>
<accession>A5CXV2</accession>
<sequence>MKQSKRYLVIVIGGGHAGTEAALASARMGVSTLLISHNIETLGQMSCNPAIGGIGKGHLVKEIDAMGGIMAHTIDKSGIQFRTLNASKGSAVRATRAQADRILYKSEIRYALENQDNLSLFQQSVDDLIIKGDQIKGVVTQMGLALMADKVILTSGTFLGGIIHIGQRNFQGGRAGDAPSNALSRKLRSYDLGVNRLKTGTPPRLDGRTLDYSLMQVQSGDIPLPTFSFIGVKEEHPRQIPCYITHTNKRTHDLIRSGLKDSPIFTGNIESIGPRYCPSIEDKVVRFNERDSHQIFVEPEGLSTNEVYPNGVSTSLSYKVQLDFINSIKGFENAQIIRPGYAIEYDFFDPRGLKQTLEVKKISGLYFAGQINGTTGYEEAAAQGLLAGVNAACAILEKDAWLPKRDESYIGVMVDDLITKGTNEPYRMFTSRAEYRLLLREDNADERLTPKAKELGLISEARWQSFQVKYNAVEQEKKRLKNTWIQANDTQANTILNQNISHEYSLFELLKRPKVDYQILSKIESGKPFLTDITLMRVIENQIKYAGYIKRQLVEIEKYRKNENTVLSTNINYNSIKALSTEVRQKLELHKPETIGQASRIQGVTPASISILLVYLKTRIS</sequence>
<dbReference type="EMBL" id="AP009247">
    <property type="protein sequence ID" value="BAF61211.1"/>
    <property type="molecule type" value="Genomic_DNA"/>
</dbReference>
<dbReference type="RefSeq" id="WP_011929481.1">
    <property type="nucleotide sequence ID" value="NC_009465.1"/>
</dbReference>
<dbReference type="SMR" id="A5CXV2"/>
<dbReference type="STRING" id="412965.COSY_0075"/>
<dbReference type="KEGG" id="vok:COSY_0075"/>
<dbReference type="eggNOG" id="COG0445">
    <property type="taxonomic scope" value="Bacteria"/>
</dbReference>
<dbReference type="HOGENOM" id="CLU_007831_2_2_6"/>
<dbReference type="OrthoDB" id="9815560at2"/>
<dbReference type="Proteomes" id="UP000000247">
    <property type="component" value="Chromosome"/>
</dbReference>
<dbReference type="GO" id="GO:0005829">
    <property type="term" value="C:cytosol"/>
    <property type="evidence" value="ECO:0007669"/>
    <property type="project" value="TreeGrafter"/>
</dbReference>
<dbReference type="GO" id="GO:0050660">
    <property type="term" value="F:flavin adenine dinucleotide binding"/>
    <property type="evidence" value="ECO:0007669"/>
    <property type="project" value="UniProtKB-UniRule"/>
</dbReference>
<dbReference type="GO" id="GO:0030488">
    <property type="term" value="P:tRNA methylation"/>
    <property type="evidence" value="ECO:0007669"/>
    <property type="project" value="TreeGrafter"/>
</dbReference>
<dbReference type="GO" id="GO:0002098">
    <property type="term" value="P:tRNA wobble uridine modification"/>
    <property type="evidence" value="ECO:0007669"/>
    <property type="project" value="InterPro"/>
</dbReference>
<dbReference type="FunFam" id="1.10.10.1800:FF:000001">
    <property type="entry name" value="tRNA uridine 5-carboxymethylaminomethyl modification enzyme MnmG"/>
    <property type="match status" value="1"/>
</dbReference>
<dbReference type="FunFam" id="1.10.150.570:FF:000001">
    <property type="entry name" value="tRNA uridine 5-carboxymethylaminomethyl modification enzyme MnmG"/>
    <property type="match status" value="1"/>
</dbReference>
<dbReference type="FunFam" id="3.50.50.60:FF:000002">
    <property type="entry name" value="tRNA uridine 5-carboxymethylaminomethyl modification enzyme MnmG"/>
    <property type="match status" value="1"/>
</dbReference>
<dbReference type="FunFam" id="3.50.50.60:FF:000010">
    <property type="entry name" value="tRNA uridine 5-carboxymethylaminomethyl modification enzyme MnmG"/>
    <property type="match status" value="1"/>
</dbReference>
<dbReference type="Gene3D" id="3.50.50.60">
    <property type="entry name" value="FAD/NAD(P)-binding domain"/>
    <property type="match status" value="2"/>
</dbReference>
<dbReference type="Gene3D" id="1.10.150.570">
    <property type="entry name" value="GidA associated domain, C-terminal subdomain"/>
    <property type="match status" value="1"/>
</dbReference>
<dbReference type="Gene3D" id="1.10.10.1800">
    <property type="entry name" value="tRNA uridine 5-carboxymethylaminomethyl modification enzyme MnmG/GidA"/>
    <property type="match status" value="1"/>
</dbReference>
<dbReference type="HAMAP" id="MF_00129">
    <property type="entry name" value="MnmG_GidA"/>
    <property type="match status" value="1"/>
</dbReference>
<dbReference type="InterPro" id="IPR036188">
    <property type="entry name" value="FAD/NAD-bd_sf"/>
</dbReference>
<dbReference type="InterPro" id="IPR049312">
    <property type="entry name" value="GIDA_C_N"/>
</dbReference>
<dbReference type="InterPro" id="IPR004416">
    <property type="entry name" value="MnmG"/>
</dbReference>
<dbReference type="InterPro" id="IPR002218">
    <property type="entry name" value="MnmG-rel"/>
</dbReference>
<dbReference type="InterPro" id="IPR020595">
    <property type="entry name" value="MnmG-rel_CS"/>
</dbReference>
<dbReference type="InterPro" id="IPR026904">
    <property type="entry name" value="MnmG_C"/>
</dbReference>
<dbReference type="InterPro" id="IPR047001">
    <property type="entry name" value="MnmG_C_subdom"/>
</dbReference>
<dbReference type="InterPro" id="IPR044920">
    <property type="entry name" value="MnmG_C_subdom_sf"/>
</dbReference>
<dbReference type="InterPro" id="IPR040131">
    <property type="entry name" value="MnmG_N"/>
</dbReference>
<dbReference type="NCBIfam" id="TIGR00136">
    <property type="entry name" value="mnmG_gidA"/>
    <property type="match status" value="1"/>
</dbReference>
<dbReference type="PANTHER" id="PTHR11806">
    <property type="entry name" value="GLUCOSE INHIBITED DIVISION PROTEIN A"/>
    <property type="match status" value="1"/>
</dbReference>
<dbReference type="PANTHER" id="PTHR11806:SF0">
    <property type="entry name" value="PROTEIN MTO1 HOMOLOG, MITOCHONDRIAL"/>
    <property type="match status" value="1"/>
</dbReference>
<dbReference type="Pfam" id="PF01134">
    <property type="entry name" value="GIDA"/>
    <property type="match status" value="1"/>
</dbReference>
<dbReference type="Pfam" id="PF21680">
    <property type="entry name" value="GIDA_C_1st"/>
    <property type="match status" value="1"/>
</dbReference>
<dbReference type="Pfam" id="PF13932">
    <property type="entry name" value="SAM_GIDA_C"/>
    <property type="match status" value="1"/>
</dbReference>
<dbReference type="SMART" id="SM01228">
    <property type="entry name" value="GIDA_assoc_3"/>
    <property type="match status" value="1"/>
</dbReference>
<dbReference type="SUPFAM" id="SSF51905">
    <property type="entry name" value="FAD/NAD(P)-binding domain"/>
    <property type="match status" value="1"/>
</dbReference>
<dbReference type="PROSITE" id="PS01280">
    <property type="entry name" value="GIDA_1"/>
    <property type="match status" value="1"/>
</dbReference>
<dbReference type="PROSITE" id="PS01281">
    <property type="entry name" value="GIDA_2"/>
    <property type="match status" value="1"/>
</dbReference>
<reference key="1">
    <citation type="journal article" date="2007" name="Curr. Biol.">
        <title>Reduced genome of the thioautotrophic intracellular symbiont in a deep-sea clam, Calyptogena okutanii.</title>
        <authorList>
            <person name="Kuwahara H."/>
            <person name="Yoshida T."/>
            <person name="Takaki Y."/>
            <person name="Shimamura S."/>
            <person name="Nishi S."/>
            <person name="Harada M."/>
            <person name="Matsuyama K."/>
            <person name="Takishita K."/>
            <person name="Kawato M."/>
            <person name="Uematsu K."/>
            <person name="Fujiwara Y."/>
            <person name="Sato T."/>
            <person name="Kato C."/>
            <person name="Kitagawa M."/>
            <person name="Kato I."/>
            <person name="Maruyama T."/>
        </authorList>
    </citation>
    <scope>NUCLEOTIDE SEQUENCE [LARGE SCALE GENOMIC DNA]</scope>
    <source>
        <strain>HA</strain>
    </source>
</reference>
<feature type="chain" id="PRO_1000016706" description="tRNA uridine 5-carboxymethylaminomethyl modification enzyme MnmG">
    <location>
        <begin position="1"/>
        <end position="621"/>
    </location>
</feature>
<feature type="binding site" evidence="1">
    <location>
        <begin position="13"/>
        <end position="18"/>
    </location>
    <ligand>
        <name>FAD</name>
        <dbReference type="ChEBI" id="CHEBI:57692"/>
    </ligand>
</feature>
<feature type="binding site" evidence="1">
    <location>
        <position position="125"/>
    </location>
    <ligand>
        <name>FAD</name>
        <dbReference type="ChEBI" id="CHEBI:57692"/>
    </ligand>
</feature>
<feature type="binding site" evidence="1">
    <location>
        <position position="180"/>
    </location>
    <ligand>
        <name>FAD</name>
        <dbReference type="ChEBI" id="CHEBI:57692"/>
    </ligand>
</feature>
<feature type="binding site" evidence="1">
    <location>
        <begin position="273"/>
        <end position="287"/>
    </location>
    <ligand>
        <name>NAD(+)</name>
        <dbReference type="ChEBI" id="CHEBI:57540"/>
    </ligand>
</feature>
<feature type="binding site" evidence="1">
    <location>
        <position position="370"/>
    </location>
    <ligand>
        <name>FAD</name>
        <dbReference type="ChEBI" id="CHEBI:57692"/>
    </ligand>
</feature>
<gene>
    <name evidence="1" type="primary">mnmG</name>
    <name evidence="1" type="synonym">gidA</name>
    <name type="ordered locus">COSY_0075</name>
</gene>
<name>MNMG_VESOH</name>
<comment type="function">
    <text evidence="1">NAD-binding protein involved in the addition of a carboxymethylaminomethyl (cmnm) group at the wobble position (U34) of certain tRNAs, forming tRNA-cmnm(5)s(2)U34.</text>
</comment>
<comment type="cofactor">
    <cofactor evidence="1">
        <name>FAD</name>
        <dbReference type="ChEBI" id="CHEBI:57692"/>
    </cofactor>
</comment>
<comment type="subunit">
    <text evidence="1">Homodimer. Heterotetramer of two MnmE and two MnmG subunits.</text>
</comment>
<comment type="subcellular location">
    <subcellularLocation>
        <location evidence="1">Cytoplasm</location>
    </subcellularLocation>
</comment>
<comment type="similarity">
    <text evidence="1">Belongs to the MnmG family.</text>
</comment>
<protein>
    <recommendedName>
        <fullName evidence="1">tRNA uridine 5-carboxymethylaminomethyl modification enzyme MnmG</fullName>
    </recommendedName>
    <alternativeName>
        <fullName evidence="1">Glucose-inhibited division protein A</fullName>
    </alternativeName>
</protein>
<evidence type="ECO:0000255" key="1">
    <source>
        <dbReference type="HAMAP-Rule" id="MF_00129"/>
    </source>
</evidence>
<keyword id="KW-0963">Cytoplasm</keyword>
<keyword id="KW-0274">FAD</keyword>
<keyword id="KW-0285">Flavoprotein</keyword>
<keyword id="KW-0520">NAD</keyword>
<keyword id="KW-1185">Reference proteome</keyword>
<keyword id="KW-0819">tRNA processing</keyword>